<protein>
    <recommendedName>
        <fullName evidence="1">Ribosomal RNA small subunit methyltransferase H</fullName>
        <ecNumber evidence="1">2.1.1.199</ecNumber>
    </recommendedName>
    <alternativeName>
        <fullName evidence="1">16S rRNA m(4)C1402 methyltransferase</fullName>
    </alternativeName>
    <alternativeName>
        <fullName evidence="1">rRNA (cytosine-N(4)-)-methyltransferase RsmH</fullName>
    </alternativeName>
</protein>
<proteinExistence type="inferred from homology"/>
<name>RSMH_BACHK</name>
<evidence type="ECO:0000255" key="1">
    <source>
        <dbReference type="HAMAP-Rule" id="MF_01007"/>
    </source>
</evidence>
<keyword id="KW-0963">Cytoplasm</keyword>
<keyword id="KW-0489">Methyltransferase</keyword>
<keyword id="KW-0698">rRNA processing</keyword>
<keyword id="KW-0949">S-adenosyl-L-methionine</keyword>
<keyword id="KW-0808">Transferase</keyword>
<organism>
    <name type="scientific">Bacillus thuringiensis subsp. konkukian (strain 97-27)</name>
    <dbReference type="NCBI Taxonomy" id="281309"/>
    <lineage>
        <taxon>Bacteria</taxon>
        <taxon>Bacillati</taxon>
        <taxon>Bacillota</taxon>
        <taxon>Bacilli</taxon>
        <taxon>Bacillales</taxon>
        <taxon>Bacillaceae</taxon>
        <taxon>Bacillus</taxon>
        <taxon>Bacillus cereus group</taxon>
    </lineage>
</organism>
<sequence length="310" mass="34949">MFNHVTVLLKETVDGLDIKPDGTYVDCTLGGGGHSSYLLSQLTEGGRLIAFDQDEIAIQNAKEKFSSYGEQFITVKSNFRYLSEKLQELGITEVDGILFDLGVSSPQLDTPERGFSYHHDAPLDMRMDQDASLTAYDVVNSWSYEQLVRIFFQYGEEKFSKQIARKIEAYRENKAIETTGELVELIKEGIPAPARRTGGHPAKRVFQAIRIAVNDELKVFEEALESAIEMVKPGGRVSVITFHSLEDRICKTTFKRNSTTPQLPPGLPIIPDEFKPKLKLITRKPILPSDIELEENNRARSAKLRIAEKR</sequence>
<feature type="chain" id="PRO_0000108575" description="Ribosomal RNA small subunit methyltransferase H">
    <location>
        <begin position="1"/>
        <end position="310"/>
    </location>
</feature>
<feature type="binding site" evidence="1">
    <location>
        <begin position="32"/>
        <end position="34"/>
    </location>
    <ligand>
        <name>S-adenosyl-L-methionine</name>
        <dbReference type="ChEBI" id="CHEBI:59789"/>
    </ligand>
</feature>
<feature type="binding site" evidence="1">
    <location>
        <position position="52"/>
    </location>
    <ligand>
        <name>S-adenosyl-L-methionine</name>
        <dbReference type="ChEBI" id="CHEBI:59789"/>
    </ligand>
</feature>
<feature type="binding site" evidence="1">
    <location>
        <position position="79"/>
    </location>
    <ligand>
        <name>S-adenosyl-L-methionine</name>
        <dbReference type="ChEBI" id="CHEBI:59789"/>
    </ligand>
</feature>
<feature type="binding site" evidence="1">
    <location>
        <position position="100"/>
    </location>
    <ligand>
        <name>S-adenosyl-L-methionine</name>
        <dbReference type="ChEBI" id="CHEBI:59789"/>
    </ligand>
</feature>
<feature type="binding site" evidence="1">
    <location>
        <position position="107"/>
    </location>
    <ligand>
        <name>S-adenosyl-L-methionine</name>
        <dbReference type="ChEBI" id="CHEBI:59789"/>
    </ligand>
</feature>
<dbReference type="EC" id="2.1.1.199" evidence="1"/>
<dbReference type="EMBL" id="AE017355">
    <property type="protein sequence ID" value="AAT60650.1"/>
    <property type="molecule type" value="Genomic_DNA"/>
</dbReference>
<dbReference type="RefSeq" id="WP_000481788.1">
    <property type="nucleotide sequence ID" value="NC_005957.1"/>
</dbReference>
<dbReference type="RefSeq" id="YP_037980.1">
    <property type="nucleotide sequence ID" value="NC_005957.1"/>
</dbReference>
<dbReference type="SMR" id="Q6HEP6"/>
<dbReference type="KEGG" id="btk:BT9727_3660"/>
<dbReference type="PATRIC" id="fig|281309.8.peg.3899"/>
<dbReference type="HOGENOM" id="CLU_038422_2_0_9"/>
<dbReference type="Proteomes" id="UP000001301">
    <property type="component" value="Chromosome"/>
</dbReference>
<dbReference type="GO" id="GO:0005737">
    <property type="term" value="C:cytoplasm"/>
    <property type="evidence" value="ECO:0007669"/>
    <property type="project" value="UniProtKB-SubCell"/>
</dbReference>
<dbReference type="GO" id="GO:0071424">
    <property type="term" value="F:rRNA (cytosine-N4-)-methyltransferase activity"/>
    <property type="evidence" value="ECO:0007669"/>
    <property type="project" value="UniProtKB-UniRule"/>
</dbReference>
<dbReference type="GO" id="GO:0070475">
    <property type="term" value="P:rRNA base methylation"/>
    <property type="evidence" value="ECO:0007669"/>
    <property type="project" value="UniProtKB-UniRule"/>
</dbReference>
<dbReference type="FunFam" id="1.10.150.170:FF:000001">
    <property type="entry name" value="Ribosomal RNA small subunit methyltransferase H"/>
    <property type="match status" value="1"/>
</dbReference>
<dbReference type="Gene3D" id="1.10.150.170">
    <property type="entry name" value="Putative methyltransferase TM0872, insert domain"/>
    <property type="match status" value="1"/>
</dbReference>
<dbReference type="Gene3D" id="3.40.50.150">
    <property type="entry name" value="Vaccinia Virus protein VP39"/>
    <property type="match status" value="1"/>
</dbReference>
<dbReference type="HAMAP" id="MF_01007">
    <property type="entry name" value="16SrRNA_methyltr_H"/>
    <property type="match status" value="1"/>
</dbReference>
<dbReference type="InterPro" id="IPR002903">
    <property type="entry name" value="RsmH"/>
</dbReference>
<dbReference type="InterPro" id="IPR023397">
    <property type="entry name" value="SAM-dep_MeTrfase_MraW_recog"/>
</dbReference>
<dbReference type="InterPro" id="IPR029063">
    <property type="entry name" value="SAM-dependent_MTases_sf"/>
</dbReference>
<dbReference type="NCBIfam" id="TIGR00006">
    <property type="entry name" value="16S rRNA (cytosine(1402)-N(4))-methyltransferase RsmH"/>
    <property type="match status" value="1"/>
</dbReference>
<dbReference type="PANTHER" id="PTHR11265:SF0">
    <property type="entry name" value="12S RRNA N4-METHYLCYTIDINE METHYLTRANSFERASE"/>
    <property type="match status" value="1"/>
</dbReference>
<dbReference type="PANTHER" id="PTHR11265">
    <property type="entry name" value="S-ADENOSYL-METHYLTRANSFERASE MRAW"/>
    <property type="match status" value="1"/>
</dbReference>
<dbReference type="Pfam" id="PF01795">
    <property type="entry name" value="Methyltransf_5"/>
    <property type="match status" value="1"/>
</dbReference>
<dbReference type="PIRSF" id="PIRSF004486">
    <property type="entry name" value="MraW"/>
    <property type="match status" value="1"/>
</dbReference>
<dbReference type="SUPFAM" id="SSF81799">
    <property type="entry name" value="Putative methyltransferase TM0872, insert domain"/>
    <property type="match status" value="1"/>
</dbReference>
<dbReference type="SUPFAM" id="SSF53335">
    <property type="entry name" value="S-adenosyl-L-methionine-dependent methyltransferases"/>
    <property type="match status" value="1"/>
</dbReference>
<reference key="1">
    <citation type="journal article" date="2006" name="J. Bacteriol.">
        <title>Pathogenomic sequence analysis of Bacillus cereus and Bacillus thuringiensis isolates closely related to Bacillus anthracis.</title>
        <authorList>
            <person name="Han C.S."/>
            <person name="Xie G."/>
            <person name="Challacombe J.F."/>
            <person name="Altherr M.R."/>
            <person name="Bhotika S.S."/>
            <person name="Bruce D."/>
            <person name="Campbell C.S."/>
            <person name="Campbell M.L."/>
            <person name="Chen J."/>
            <person name="Chertkov O."/>
            <person name="Cleland C."/>
            <person name="Dimitrijevic M."/>
            <person name="Doggett N.A."/>
            <person name="Fawcett J.J."/>
            <person name="Glavina T."/>
            <person name="Goodwin L.A."/>
            <person name="Hill K.K."/>
            <person name="Hitchcock P."/>
            <person name="Jackson P.J."/>
            <person name="Keim P."/>
            <person name="Kewalramani A.R."/>
            <person name="Longmire J."/>
            <person name="Lucas S."/>
            <person name="Malfatti S."/>
            <person name="McMurry K."/>
            <person name="Meincke L.J."/>
            <person name="Misra M."/>
            <person name="Moseman B.L."/>
            <person name="Mundt M."/>
            <person name="Munk A.C."/>
            <person name="Okinaka R.T."/>
            <person name="Parson-Quintana B."/>
            <person name="Reilly L.P."/>
            <person name="Richardson P."/>
            <person name="Robinson D.L."/>
            <person name="Rubin E."/>
            <person name="Saunders E."/>
            <person name="Tapia R."/>
            <person name="Tesmer J.G."/>
            <person name="Thayer N."/>
            <person name="Thompson L.S."/>
            <person name="Tice H."/>
            <person name="Ticknor L.O."/>
            <person name="Wills P.L."/>
            <person name="Brettin T.S."/>
            <person name="Gilna P."/>
        </authorList>
    </citation>
    <scope>NUCLEOTIDE SEQUENCE [LARGE SCALE GENOMIC DNA]</scope>
    <source>
        <strain>97-27</strain>
    </source>
</reference>
<accession>Q6HEP6</accession>
<gene>
    <name evidence="1" type="primary">rsmH</name>
    <name type="synonym">mraW</name>
    <name type="ordered locus">BT9727_3660</name>
</gene>
<comment type="function">
    <text evidence="1">Specifically methylates the N4 position of cytidine in position 1402 (C1402) of 16S rRNA.</text>
</comment>
<comment type="catalytic activity">
    <reaction evidence="1">
        <text>cytidine(1402) in 16S rRNA + S-adenosyl-L-methionine = N(4)-methylcytidine(1402) in 16S rRNA + S-adenosyl-L-homocysteine + H(+)</text>
        <dbReference type="Rhea" id="RHEA:42928"/>
        <dbReference type="Rhea" id="RHEA-COMP:10286"/>
        <dbReference type="Rhea" id="RHEA-COMP:10287"/>
        <dbReference type="ChEBI" id="CHEBI:15378"/>
        <dbReference type="ChEBI" id="CHEBI:57856"/>
        <dbReference type="ChEBI" id="CHEBI:59789"/>
        <dbReference type="ChEBI" id="CHEBI:74506"/>
        <dbReference type="ChEBI" id="CHEBI:82748"/>
        <dbReference type="EC" id="2.1.1.199"/>
    </reaction>
</comment>
<comment type="subcellular location">
    <subcellularLocation>
        <location evidence="1">Cytoplasm</location>
    </subcellularLocation>
</comment>
<comment type="similarity">
    <text evidence="1">Belongs to the methyltransferase superfamily. RsmH family.</text>
</comment>